<protein>
    <recommendedName>
        <fullName>Probable Xaa-Pro aminopeptidase PEPP</fullName>
        <ecNumber>3.4.11.9</ecNumber>
    </recommendedName>
    <alternativeName>
        <fullName>Aminoacylproline aminopeptidase</fullName>
    </alternativeName>
    <alternativeName>
        <fullName>Prolidase</fullName>
    </alternativeName>
</protein>
<proteinExistence type="inferred from homology"/>
<gene>
    <name type="primary">PEPP</name>
    <name type="ORF">GLRG_11122</name>
</gene>
<evidence type="ECO:0000250" key="1"/>
<evidence type="ECO:0000305" key="2"/>
<name>AMPP3_COLGM</name>
<feature type="chain" id="PRO_0000411871" description="Probable Xaa-Pro aminopeptidase PEPP">
    <location>
        <begin position="1"/>
        <end position="461"/>
    </location>
</feature>
<feature type="binding site" evidence="1">
    <location>
        <position position="257"/>
    </location>
    <ligand>
        <name>Mn(2+)</name>
        <dbReference type="ChEBI" id="CHEBI:29035"/>
        <label>2</label>
    </ligand>
</feature>
<feature type="binding site" evidence="1">
    <location>
        <position position="268"/>
    </location>
    <ligand>
        <name>Mn(2+)</name>
        <dbReference type="ChEBI" id="CHEBI:29035"/>
        <label>1</label>
    </ligand>
</feature>
<feature type="binding site" evidence="1">
    <location>
        <position position="268"/>
    </location>
    <ligand>
        <name>Mn(2+)</name>
        <dbReference type="ChEBI" id="CHEBI:29035"/>
        <label>2</label>
    </ligand>
</feature>
<feature type="binding site" evidence="1">
    <location>
        <position position="391"/>
    </location>
    <ligand>
        <name>Mn(2+)</name>
        <dbReference type="ChEBI" id="CHEBI:29035"/>
        <label>1</label>
    </ligand>
</feature>
<feature type="binding site" evidence="1">
    <location>
        <position position="431"/>
    </location>
    <ligand>
        <name>Mn(2+)</name>
        <dbReference type="ChEBI" id="CHEBI:29035"/>
        <label>1</label>
    </ligand>
</feature>
<feature type="binding site" evidence="1">
    <location>
        <position position="431"/>
    </location>
    <ligand>
        <name>Mn(2+)</name>
        <dbReference type="ChEBI" id="CHEBI:29035"/>
        <label>2</label>
    </ligand>
</feature>
<keyword id="KW-0031">Aminopeptidase</keyword>
<keyword id="KW-0378">Hydrolase</keyword>
<keyword id="KW-0464">Manganese</keyword>
<keyword id="KW-0479">Metal-binding</keyword>
<keyword id="KW-0482">Metalloprotease</keyword>
<keyword id="KW-0645">Protease</keyword>
<keyword id="KW-1185">Reference proteome</keyword>
<sequence>MTQDYETVLKGKYPAKEHALRVADYVKSKVPDATGILYVEGRMTKMLEDNDEPEPFRQRRYFYYLTGCPLADCHYIFDLATSKSTLFIPPIDPDSVIWSGLPVSAAEAKELYDVDEVKYTTDVNAELARLGKGPKKTVFAIQNQVLDSITFLEFDEKNFSILKDAIERCRVVKDDYEIALTRKANAVSTVAHHAVVEYVKKAKNERELEALFLQRSVANGAKNQAYHGIFAGGRAAATLHYVANDAPLEGKLNLLLDAGTEWNCYASDITRTFPISGKFSKESRQIYDIVLKMQLETTAALKEGVIWDEIHLLAHKIAIDGLHLIGILKGDKDEILKNRTSVAFFPHGLGHYLGMDTHDVGGNANYADRDPMFRYLRVRGALPAGSIVTVEPGIYFCSFIIEPYLKDPVHSKFIDSAVLEKYWDVGGVRIEDNILITKDGSENLTPTIKDPDELEKIIQAS</sequence>
<accession>E3QYP0</accession>
<dbReference type="EC" id="3.4.11.9"/>
<dbReference type="EMBL" id="GG697405">
    <property type="protein sequence ID" value="EFQ35978.1"/>
    <property type="molecule type" value="Genomic_DNA"/>
</dbReference>
<dbReference type="RefSeq" id="XP_008099998.1">
    <property type="nucleotide sequence ID" value="XM_008101807.1"/>
</dbReference>
<dbReference type="SMR" id="E3QYP0"/>
<dbReference type="STRING" id="645133.E3QYP0"/>
<dbReference type="EnsemblFungi" id="EFQ35978">
    <property type="protein sequence ID" value="EFQ35978"/>
    <property type="gene ID" value="GLRG_11122"/>
</dbReference>
<dbReference type="GeneID" id="24416487"/>
<dbReference type="VEuPathDB" id="FungiDB:GLRG_11122"/>
<dbReference type="eggNOG" id="KOG2737">
    <property type="taxonomic scope" value="Eukaryota"/>
</dbReference>
<dbReference type="HOGENOM" id="CLU_017266_1_2_1"/>
<dbReference type="OrthoDB" id="10261878at2759"/>
<dbReference type="Proteomes" id="UP000008782">
    <property type="component" value="Unassembled WGS sequence"/>
</dbReference>
<dbReference type="GO" id="GO:0030145">
    <property type="term" value="F:manganese ion binding"/>
    <property type="evidence" value="ECO:0007669"/>
    <property type="project" value="InterPro"/>
</dbReference>
<dbReference type="GO" id="GO:0070006">
    <property type="term" value="F:metalloaminopeptidase activity"/>
    <property type="evidence" value="ECO:0007669"/>
    <property type="project" value="InterPro"/>
</dbReference>
<dbReference type="GO" id="GO:0006508">
    <property type="term" value="P:proteolysis"/>
    <property type="evidence" value="ECO:0007669"/>
    <property type="project" value="UniProtKB-KW"/>
</dbReference>
<dbReference type="CDD" id="cd01087">
    <property type="entry name" value="Prolidase"/>
    <property type="match status" value="1"/>
</dbReference>
<dbReference type="Gene3D" id="3.90.230.10">
    <property type="entry name" value="Creatinase/methionine aminopeptidase superfamily"/>
    <property type="match status" value="1"/>
</dbReference>
<dbReference type="Gene3D" id="3.40.350.10">
    <property type="entry name" value="Creatinase/prolidase N-terminal domain"/>
    <property type="match status" value="1"/>
</dbReference>
<dbReference type="InterPro" id="IPR007865">
    <property type="entry name" value="Aminopep_P_N"/>
</dbReference>
<dbReference type="InterPro" id="IPR029149">
    <property type="entry name" value="Creatin/AminoP/Spt16_N"/>
</dbReference>
<dbReference type="InterPro" id="IPR036005">
    <property type="entry name" value="Creatinase/aminopeptidase-like"/>
</dbReference>
<dbReference type="InterPro" id="IPR000994">
    <property type="entry name" value="Pept_M24"/>
</dbReference>
<dbReference type="InterPro" id="IPR052433">
    <property type="entry name" value="X-Pro_dipept-like"/>
</dbReference>
<dbReference type="PANTHER" id="PTHR43226">
    <property type="entry name" value="XAA-PRO AMINOPEPTIDASE 3"/>
    <property type="match status" value="1"/>
</dbReference>
<dbReference type="PANTHER" id="PTHR43226:SF1">
    <property type="entry name" value="XAA-PRO DIPEPTIDASE"/>
    <property type="match status" value="1"/>
</dbReference>
<dbReference type="Pfam" id="PF05195">
    <property type="entry name" value="AMP_N"/>
    <property type="match status" value="1"/>
</dbReference>
<dbReference type="Pfam" id="PF00557">
    <property type="entry name" value="Peptidase_M24"/>
    <property type="match status" value="1"/>
</dbReference>
<dbReference type="SMART" id="SM01011">
    <property type="entry name" value="AMP_N"/>
    <property type="match status" value="1"/>
</dbReference>
<dbReference type="SUPFAM" id="SSF55920">
    <property type="entry name" value="Creatinase/aminopeptidase"/>
    <property type="match status" value="1"/>
</dbReference>
<dbReference type="SUPFAM" id="SSF53092">
    <property type="entry name" value="Creatinase/prolidase N-terminal domain"/>
    <property type="match status" value="1"/>
</dbReference>
<organism>
    <name type="scientific">Colletotrichum graminicola (strain M1.001 / M2 / FGSC 10212)</name>
    <name type="common">Maize anthracnose fungus</name>
    <name type="synonym">Glomerella graminicola</name>
    <dbReference type="NCBI Taxonomy" id="645133"/>
    <lineage>
        <taxon>Eukaryota</taxon>
        <taxon>Fungi</taxon>
        <taxon>Dikarya</taxon>
        <taxon>Ascomycota</taxon>
        <taxon>Pezizomycotina</taxon>
        <taxon>Sordariomycetes</taxon>
        <taxon>Hypocreomycetidae</taxon>
        <taxon>Glomerellales</taxon>
        <taxon>Glomerellaceae</taxon>
        <taxon>Colletotrichum</taxon>
        <taxon>Colletotrichum graminicola species complex</taxon>
    </lineage>
</organism>
<comment type="function">
    <text evidence="1">Catalyzes the removal of a penultimate prolyl residue from the N-termini of peptides.</text>
</comment>
<comment type="catalytic activity">
    <reaction>
        <text>Release of any N-terminal amino acid, including proline, that is linked to proline, even from a dipeptide or tripeptide.</text>
        <dbReference type="EC" id="3.4.11.9"/>
    </reaction>
</comment>
<comment type="cofactor">
    <cofactor evidence="1">
        <name>Mn(2+)</name>
        <dbReference type="ChEBI" id="CHEBI:29035"/>
    </cofactor>
    <text evidence="1">Binds 2 manganese ions per subunit.</text>
</comment>
<comment type="similarity">
    <text evidence="2">Belongs to the peptidase M24B family.</text>
</comment>
<reference key="1">
    <citation type="journal article" date="2012" name="Nat. Genet.">
        <title>Lifestyle transitions in plant pathogenic Colletotrichum fungi deciphered by genome and transcriptome analyses.</title>
        <authorList>
            <person name="O'Connell R.J."/>
            <person name="Thon M.R."/>
            <person name="Hacquard S."/>
            <person name="Amyotte S.G."/>
            <person name="Kleemann J."/>
            <person name="Torres M.F."/>
            <person name="Damm U."/>
            <person name="Buiate E.A."/>
            <person name="Epstein L."/>
            <person name="Alkan N."/>
            <person name="Altmueller J."/>
            <person name="Alvarado-Balderrama L."/>
            <person name="Bauser C.A."/>
            <person name="Becker C."/>
            <person name="Birren B.W."/>
            <person name="Chen Z."/>
            <person name="Choi J."/>
            <person name="Crouch J.A."/>
            <person name="Duvick J.P."/>
            <person name="Farman M.A."/>
            <person name="Gan P."/>
            <person name="Heiman D."/>
            <person name="Henrissat B."/>
            <person name="Howard R.J."/>
            <person name="Kabbage M."/>
            <person name="Koch C."/>
            <person name="Kracher B."/>
            <person name="Kubo Y."/>
            <person name="Law A.D."/>
            <person name="Lebrun M.-H."/>
            <person name="Lee Y.-H."/>
            <person name="Miyara I."/>
            <person name="Moore N."/>
            <person name="Neumann U."/>
            <person name="Nordstroem K."/>
            <person name="Panaccione D.G."/>
            <person name="Panstruga R."/>
            <person name="Place M."/>
            <person name="Proctor R.H."/>
            <person name="Prusky D."/>
            <person name="Rech G."/>
            <person name="Reinhardt R."/>
            <person name="Rollins J.A."/>
            <person name="Rounsley S."/>
            <person name="Schardl C.L."/>
            <person name="Schwartz D.C."/>
            <person name="Shenoy N."/>
            <person name="Shirasu K."/>
            <person name="Sikhakolli U.R."/>
            <person name="Stueber K."/>
            <person name="Sukno S.A."/>
            <person name="Sweigard J.A."/>
            <person name="Takano Y."/>
            <person name="Takahara H."/>
            <person name="Trail F."/>
            <person name="van der Does H.C."/>
            <person name="Voll L.M."/>
            <person name="Will I."/>
            <person name="Young S."/>
            <person name="Zeng Q."/>
            <person name="Zhang J."/>
            <person name="Zhou S."/>
            <person name="Dickman M.B."/>
            <person name="Schulze-Lefert P."/>
            <person name="Ver Loren van Themaat E."/>
            <person name="Ma L.-J."/>
            <person name="Vaillancourt L.J."/>
        </authorList>
    </citation>
    <scope>NUCLEOTIDE SEQUENCE [LARGE SCALE GENOMIC DNA]</scope>
    <source>
        <strain>M1.001 / M2 / FGSC 10212</strain>
    </source>
</reference>